<comment type="function">
    <text evidence="1">Catalyzes the ATP- as well as the pyrophosphate-dependent phosphorylation of a specific serine residue in HPr, a phosphocarrier protein of the phosphoenolpyruvate-dependent sugar phosphotransferase system (PTS). HprK/P also catalyzes the pyrophosphate-producing, inorganic phosphate-dependent dephosphorylation (phosphorolysis) of seryl-phosphorylated HPr (P-Ser-HPr).</text>
</comment>
<comment type="catalytic activity">
    <reaction evidence="1">
        <text>[HPr protein]-L-serine + ATP = [HPr protein]-O-phospho-L-serine + ADP + H(+)</text>
        <dbReference type="Rhea" id="RHEA:46600"/>
        <dbReference type="Rhea" id="RHEA-COMP:11602"/>
        <dbReference type="Rhea" id="RHEA-COMP:11603"/>
        <dbReference type="ChEBI" id="CHEBI:15378"/>
        <dbReference type="ChEBI" id="CHEBI:29999"/>
        <dbReference type="ChEBI" id="CHEBI:30616"/>
        <dbReference type="ChEBI" id="CHEBI:83421"/>
        <dbReference type="ChEBI" id="CHEBI:456216"/>
    </reaction>
</comment>
<comment type="catalytic activity">
    <reaction evidence="1">
        <text>[HPr protein]-O-phospho-L-serine + phosphate + H(+) = [HPr protein]-L-serine + diphosphate</text>
        <dbReference type="Rhea" id="RHEA:46604"/>
        <dbReference type="Rhea" id="RHEA-COMP:11602"/>
        <dbReference type="Rhea" id="RHEA-COMP:11603"/>
        <dbReference type="ChEBI" id="CHEBI:15378"/>
        <dbReference type="ChEBI" id="CHEBI:29999"/>
        <dbReference type="ChEBI" id="CHEBI:33019"/>
        <dbReference type="ChEBI" id="CHEBI:43474"/>
        <dbReference type="ChEBI" id="CHEBI:83421"/>
    </reaction>
</comment>
<comment type="cofactor">
    <cofactor evidence="1">
        <name>Mg(2+)</name>
        <dbReference type="ChEBI" id="CHEBI:18420"/>
    </cofactor>
</comment>
<comment type="subunit">
    <text evidence="1">Homohexamer.</text>
</comment>
<comment type="domain">
    <text evidence="1">The Walker A ATP-binding motif also binds Pi and PPi.</text>
</comment>
<comment type="miscellaneous">
    <text evidence="1">Both phosphorylation and phosphorolysis are carried out by the same active site and suggest a common mechanism for both reactions.</text>
</comment>
<comment type="similarity">
    <text evidence="1">Belongs to the HPrK/P family.</text>
</comment>
<name>HPRK_BURL3</name>
<sequence>MDTSSINAQSIFDDNAATLKLSWLTGHEGWERGFSADTVGNATSSADLVGHLNLIHPNRIQVLGEAEIDYYQRQTDEDRSRHMAELIALEPPFLVVAGGAAAPPELVLRCTRSSTPLFTTPMSAAAVIDSLRLYMSRILAPRATLHGVFIDILGMGVLLTGDSGLGKSELGLELISRGHGLVADDAVDFVRLGPDFVEGRCPPLLQNLLEVRGLGLLDIKTIFGETAVRRKMKLKLIVQLVRRPDGEFQRLPLESQTVDVLGLPISKVTIQVAAGRNLAVLVEAAVRNTILQLRGIDTLRDFMDRQRLAMQDPDSQFPGKLV</sequence>
<feature type="chain" id="PRO_1000067138" description="HPr kinase/phosphorylase">
    <location>
        <begin position="1"/>
        <end position="322"/>
    </location>
</feature>
<feature type="region of interest" description="Important for the catalytic mechanism of both phosphorylation and dephosphorylation" evidence="1">
    <location>
        <begin position="209"/>
        <end position="218"/>
    </location>
</feature>
<feature type="region of interest" description="Important for the catalytic mechanism of dephosphorylation" evidence="1">
    <location>
        <begin position="271"/>
        <end position="276"/>
    </location>
</feature>
<feature type="active site" evidence="1">
    <location>
        <position position="146"/>
    </location>
</feature>
<feature type="active site" evidence="1">
    <location>
        <position position="167"/>
    </location>
</feature>
<feature type="active site" description="Proton acceptor; for phosphorylation activity. Proton donor; for dephosphorylation activity" evidence="1">
    <location>
        <position position="185"/>
    </location>
</feature>
<feature type="active site" evidence="1">
    <location>
        <position position="250"/>
    </location>
</feature>
<feature type="binding site" evidence="1">
    <location>
        <begin position="161"/>
        <end position="168"/>
    </location>
    <ligand>
        <name>ATP</name>
        <dbReference type="ChEBI" id="CHEBI:30616"/>
    </ligand>
</feature>
<feature type="binding site" evidence="1">
    <location>
        <position position="168"/>
    </location>
    <ligand>
        <name>Mg(2+)</name>
        <dbReference type="ChEBI" id="CHEBI:18420"/>
    </ligand>
</feature>
<feature type="binding site" evidence="1">
    <location>
        <position position="210"/>
    </location>
    <ligand>
        <name>Mg(2+)</name>
        <dbReference type="ChEBI" id="CHEBI:18420"/>
    </ligand>
</feature>
<organism>
    <name type="scientific">Burkholderia lata (strain ATCC 17760 / DSM 23089 / LMG 22485 / NCIMB 9086 / R18194 / 383)</name>
    <dbReference type="NCBI Taxonomy" id="482957"/>
    <lineage>
        <taxon>Bacteria</taxon>
        <taxon>Pseudomonadati</taxon>
        <taxon>Pseudomonadota</taxon>
        <taxon>Betaproteobacteria</taxon>
        <taxon>Burkholderiales</taxon>
        <taxon>Burkholderiaceae</taxon>
        <taxon>Burkholderia</taxon>
        <taxon>Burkholderia cepacia complex</taxon>
    </lineage>
</organism>
<dbReference type="EC" id="2.7.11.-" evidence="1"/>
<dbReference type="EC" id="2.7.4.-" evidence="1"/>
<dbReference type="EMBL" id="CP000151">
    <property type="protein sequence ID" value="ABB09718.1"/>
    <property type="molecule type" value="Genomic_DNA"/>
</dbReference>
<dbReference type="RefSeq" id="WP_011353227.1">
    <property type="nucleotide sequence ID" value="NZ_WNDV01000010.1"/>
</dbReference>
<dbReference type="SMR" id="Q39CU8"/>
<dbReference type="GeneID" id="93194132"/>
<dbReference type="KEGG" id="bur:Bcep18194_A6124"/>
<dbReference type="HOGENOM" id="CLU_052030_0_2_4"/>
<dbReference type="Proteomes" id="UP000002705">
    <property type="component" value="Chromosome 1"/>
</dbReference>
<dbReference type="GO" id="GO:0005524">
    <property type="term" value="F:ATP binding"/>
    <property type="evidence" value="ECO:0007669"/>
    <property type="project" value="UniProtKB-UniRule"/>
</dbReference>
<dbReference type="GO" id="GO:0000287">
    <property type="term" value="F:magnesium ion binding"/>
    <property type="evidence" value="ECO:0007669"/>
    <property type="project" value="UniProtKB-UniRule"/>
</dbReference>
<dbReference type="GO" id="GO:0000155">
    <property type="term" value="F:phosphorelay sensor kinase activity"/>
    <property type="evidence" value="ECO:0007669"/>
    <property type="project" value="InterPro"/>
</dbReference>
<dbReference type="GO" id="GO:0004674">
    <property type="term" value="F:protein serine/threonine kinase activity"/>
    <property type="evidence" value="ECO:0007669"/>
    <property type="project" value="UniProtKB-KW"/>
</dbReference>
<dbReference type="GO" id="GO:0004712">
    <property type="term" value="F:protein serine/threonine/tyrosine kinase activity"/>
    <property type="evidence" value="ECO:0007669"/>
    <property type="project" value="UniProtKB-UniRule"/>
</dbReference>
<dbReference type="GO" id="GO:0006109">
    <property type="term" value="P:regulation of carbohydrate metabolic process"/>
    <property type="evidence" value="ECO:0007669"/>
    <property type="project" value="UniProtKB-UniRule"/>
</dbReference>
<dbReference type="CDD" id="cd01918">
    <property type="entry name" value="HprK_C"/>
    <property type="match status" value="1"/>
</dbReference>
<dbReference type="FunFam" id="3.40.50.300:FF:000174">
    <property type="entry name" value="HPr kinase/phosphorylase"/>
    <property type="match status" value="1"/>
</dbReference>
<dbReference type="Gene3D" id="3.40.1390.20">
    <property type="entry name" value="HprK N-terminal domain-like"/>
    <property type="match status" value="1"/>
</dbReference>
<dbReference type="Gene3D" id="3.40.50.300">
    <property type="entry name" value="P-loop containing nucleotide triphosphate hydrolases"/>
    <property type="match status" value="1"/>
</dbReference>
<dbReference type="HAMAP" id="MF_01249">
    <property type="entry name" value="HPr_kinase"/>
    <property type="match status" value="1"/>
</dbReference>
<dbReference type="InterPro" id="IPR003755">
    <property type="entry name" value="HPr(Ser)_kin/Pase"/>
</dbReference>
<dbReference type="InterPro" id="IPR011104">
    <property type="entry name" value="Hpr_kin/Pase_C"/>
</dbReference>
<dbReference type="InterPro" id="IPR011126">
    <property type="entry name" value="Hpr_kin/Pase_Hpr_N"/>
</dbReference>
<dbReference type="InterPro" id="IPR027417">
    <property type="entry name" value="P-loop_NTPase"/>
</dbReference>
<dbReference type="InterPro" id="IPR028979">
    <property type="entry name" value="Ser_kin/Pase_Hpr-like_N_sf"/>
</dbReference>
<dbReference type="NCBIfam" id="TIGR00679">
    <property type="entry name" value="hpr-ser"/>
    <property type="match status" value="1"/>
</dbReference>
<dbReference type="PANTHER" id="PTHR30305:SF1">
    <property type="entry name" value="HPR KINASE_PHOSPHORYLASE"/>
    <property type="match status" value="1"/>
</dbReference>
<dbReference type="PANTHER" id="PTHR30305">
    <property type="entry name" value="PROTEIN YJDM-RELATED"/>
    <property type="match status" value="1"/>
</dbReference>
<dbReference type="Pfam" id="PF07475">
    <property type="entry name" value="Hpr_kinase_C"/>
    <property type="match status" value="1"/>
</dbReference>
<dbReference type="Pfam" id="PF02603">
    <property type="entry name" value="Hpr_kinase_N"/>
    <property type="match status" value="1"/>
</dbReference>
<dbReference type="SUPFAM" id="SSF75138">
    <property type="entry name" value="HprK N-terminal domain-like"/>
    <property type="match status" value="1"/>
</dbReference>
<dbReference type="SUPFAM" id="SSF53795">
    <property type="entry name" value="PEP carboxykinase-like"/>
    <property type="match status" value="1"/>
</dbReference>
<evidence type="ECO:0000255" key="1">
    <source>
        <dbReference type="HAMAP-Rule" id="MF_01249"/>
    </source>
</evidence>
<keyword id="KW-0067">ATP-binding</keyword>
<keyword id="KW-0418">Kinase</keyword>
<keyword id="KW-0460">Magnesium</keyword>
<keyword id="KW-0479">Metal-binding</keyword>
<keyword id="KW-0511">Multifunctional enzyme</keyword>
<keyword id="KW-0547">Nucleotide-binding</keyword>
<keyword id="KW-0723">Serine/threonine-protein kinase</keyword>
<keyword id="KW-0808">Transferase</keyword>
<protein>
    <recommendedName>
        <fullName evidence="1">HPr kinase/phosphorylase</fullName>
        <shortName evidence="1">HPrK/P</shortName>
        <ecNumber evidence="1">2.7.11.-</ecNumber>
        <ecNumber evidence="1">2.7.4.-</ecNumber>
    </recommendedName>
    <alternativeName>
        <fullName evidence="1">HPr(Ser) kinase/phosphorylase</fullName>
    </alternativeName>
</protein>
<proteinExistence type="inferred from homology"/>
<accession>Q39CU8</accession>
<gene>
    <name evidence="1" type="primary">hprK</name>
    <name type="ordered locus">Bcep18194_A6124</name>
</gene>
<reference key="1">
    <citation type="submission" date="2005-10" db="EMBL/GenBank/DDBJ databases">
        <title>Complete sequence of chromosome 1 of Burkholderia sp. 383.</title>
        <authorList>
            <consortium name="US DOE Joint Genome Institute"/>
            <person name="Copeland A."/>
            <person name="Lucas S."/>
            <person name="Lapidus A."/>
            <person name="Barry K."/>
            <person name="Detter J.C."/>
            <person name="Glavina T."/>
            <person name="Hammon N."/>
            <person name="Israni S."/>
            <person name="Pitluck S."/>
            <person name="Chain P."/>
            <person name="Malfatti S."/>
            <person name="Shin M."/>
            <person name="Vergez L."/>
            <person name="Schmutz J."/>
            <person name="Larimer F."/>
            <person name="Land M."/>
            <person name="Kyrpides N."/>
            <person name="Lykidis A."/>
            <person name="Richardson P."/>
        </authorList>
    </citation>
    <scope>NUCLEOTIDE SEQUENCE [LARGE SCALE GENOMIC DNA]</scope>
    <source>
        <strain>ATCC 17760 / DSM 23089 / LMG 22485 / NCIMB 9086 / R18194 / 383</strain>
    </source>
</reference>